<name>INO80_DROME</name>
<accession>Q9VDY1</accession>
<accession>Q8T9F9</accession>
<sequence>MEAKPVPAPQPRPRAMAEPLHIQRLEAALNMRPFMNMAKRSLRKPLSSDEETDDEHVVKREHDVQDSDDSSTVGVVRMKQSSKRKSRLLASKEERQSVKAQLYNFNDLTSDREWLYDLLLSDTESDDPTITEDEYVQQLLREHVREQRQRKNYYKKAANAQYAYYGSGLLSNHDIFAERQLATAGVRKRRRRTKQEILMARLAEAQAGPKPPKQRRRGRKKRDNMGSPESGEVPPSELGKYTFGDTLPNNEDDDEDGGEVDYKRELASLALDYPEEEEIEEEVDVEGGTEGQVTKVRRKRKNPAALAARRRRIWQIMSKKESGRLQRIKSNNHKEMLANCKRVAGMCAKVVRQRAINSQRIMKETVWRAKRLTREMLAYWKRYERVERDQRRKQEREAEEQRKQDVELIEVKRQQRKLNFLITQTELYAHFMSKKLGQGSEEDQLRILSQLDEETNARLAAQDDYDAGEMKLLAQENAEAAMQRDLDKTRAFDVFAKKKEKEEEEQAQESVEDIKPEPRPEMKDLPQPKMFKGTLKGYQIKGMTWLANIYDQGISGILADEMGLGKTVQSIAFLCHIAEHYGVWGPFLVISPASTLHNWQQEMSRFVPDFKVVPYWGSPAERKILRQFWDQKHLHTRDASFHVVITSYQLVVSDYKYFNRIKWQYMVLDEAQAIKSAASQRWKLLLGFSCRNRLLLSGTPIQNSMAELWALLHFIMPTLFDSHDEFNEWFSKDIESHAENKTGIDEKQISRLHMILKPFMLRRIKKDVENELSDKIEIMVYCPLTIRQKLLYRALKQKIRIEDLLHLTSGSTTTSSSSSASNLMNLVMQFRKVCNHPELFERRDARSPFFMRCAEYTIPRLIHEEGLIHRMLPSRKHLLYNRFNIFKSEYIQRSLFEDVNVNSCFGFTRLCDLSVGDMVEVTLNGLIDFLLHYRRVLEKYPLLAYRRFWWKKQPDSRYQLLEPMLENKLALDYMPPNSVLKNFIFTAMTANESSVYAFGDYFTYNMQETIEHRVIRSKILKKKTSLIEEMEDVSKQKLEIESVEVQTKSNAKSDVKVTTLLLLPEFPHRPRKPRKYVCEPLSMPRILYDLGQKVQAVHRYLYCDSRSAAWSQIRHNQCENSQGRELVSSGLALCKPHGGWSSIVVPDKETLITDAGKLFVLDNLLTRLKANGHRVLIYSQMTKMIDLLEEYMWHRKHRYMRLDGSSKISARRDMVADFQTRADIFVFLLSTRAGGLGINLTAADTVIFYDSDWNPTVDQQAMDRAHRLGQTKQVTVYRLICKGTIEERILQRAREKSEIQRMVISGGNFKPDTLKPKEVVSLLLDDEEIEMKYRQEAKLQSSSPIPAATQSERKRRHPQKDVNMGGTTIAATSATQNPDDDVPSCSSAAKRIKLETEEDFIDVGITSSASSVGTDSNHPTLSQETYVPGATCVQQTEIDSENEALVVDGDSPTMLGQNESMNFLDDLSGISPMRRRHHPRGTRRGRPRGSTRRGGGHGSIPRVLTPTQAATPAVPATASQAAAAGTGAAAGTSSPLPQQEVSGGGDNAGVPLHEEEYRTSPSGQSPGVSCKRGPGRPRSKTATPISRGTRGAPRARRPMGPLLVPLGRSPDDTPPSSSPATSRAPSPLSGSHGAVGPE</sequence>
<protein>
    <recommendedName>
        <fullName evidence="12">Chromatin-remodeling ATPase INO80</fullName>
        <shortName>dINO80</shortName>
        <ecNumber evidence="1">3.6.4.-</ecNumber>
    </recommendedName>
</protein>
<organism>
    <name type="scientific">Drosophila melanogaster</name>
    <name type="common">Fruit fly</name>
    <dbReference type="NCBI Taxonomy" id="7227"/>
    <lineage>
        <taxon>Eukaryota</taxon>
        <taxon>Metazoa</taxon>
        <taxon>Ecdysozoa</taxon>
        <taxon>Arthropoda</taxon>
        <taxon>Hexapoda</taxon>
        <taxon>Insecta</taxon>
        <taxon>Pterygota</taxon>
        <taxon>Neoptera</taxon>
        <taxon>Endopterygota</taxon>
        <taxon>Diptera</taxon>
        <taxon>Brachycera</taxon>
        <taxon>Muscomorpha</taxon>
        <taxon>Ephydroidea</taxon>
        <taxon>Drosophilidae</taxon>
        <taxon>Drosophila</taxon>
        <taxon>Sophophora</taxon>
    </lineage>
</organism>
<dbReference type="EC" id="3.6.4.-" evidence="1"/>
<dbReference type="EMBL" id="AE014297">
    <property type="protein sequence ID" value="AAF55658.2"/>
    <property type="molecule type" value="Genomic_DNA"/>
</dbReference>
<dbReference type="EMBL" id="AY069786">
    <property type="protein sequence ID" value="AAL39931.1"/>
    <property type="molecule type" value="mRNA"/>
</dbReference>
<dbReference type="RefSeq" id="NP_732413.1">
    <property type="nucleotide sequence ID" value="NM_169854.2"/>
</dbReference>
<dbReference type="SMR" id="Q9VDY1"/>
<dbReference type="BioGRID" id="67311">
    <property type="interactions" value="5"/>
</dbReference>
<dbReference type="ComplexPortal" id="CPX-2693">
    <property type="entry name" value="INO80 chromatin remodeling complex"/>
</dbReference>
<dbReference type="FunCoup" id="Q9VDY1">
    <property type="interactions" value="2221"/>
</dbReference>
<dbReference type="IntAct" id="Q9VDY1">
    <property type="interactions" value="389"/>
</dbReference>
<dbReference type="STRING" id="7227.FBpp0083185"/>
<dbReference type="GlyGen" id="Q9VDY1">
    <property type="glycosylation" value="1 site"/>
</dbReference>
<dbReference type="iPTMnet" id="Q9VDY1"/>
<dbReference type="PaxDb" id="7227-FBpp0083185"/>
<dbReference type="EnsemblMetazoa" id="FBtr0083771">
    <property type="protein sequence ID" value="FBpp0083185"/>
    <property type="gene ID" value="FBgn0086613"/>
</dbReference>
<dbReference type="GeneID" id="42314"/>
<dbReference type="KEGG" id="dme:Dmel_CG31212"/>
<dbReference type="UCSC" id="CG31212-RA">
    <property type="organism name" value="d. melanogaster"/>
</dbReference>
<dbReference type="AGR" id="FB:FBgn0289122"/>
<dbReference type="CTD" id="54617"/>
<dbReference type="FlyBase" id="FBgn0289122">
    <property type="gene designation" value="Ino80"/>
</dbReference>
<dbReference type="VEuPathDB" id="VectorBase:FBgn0086613"/>
<dbReference type="eggNOG" id="KOG0388">
    <property type="taxonomic scope" value="Eukaryota"/>
</dbReference>
<dbReference type="GeneTree" id="ENSGT00900000141110"/>
<dbReference type="HOGENOM" id="CLU_000315_19_0_1"/>
<dbReference type="InParanoid" id="Q9VDY1"/>
<dbReference type="OMA" id="NYDCERM"/>
<dbReference type="OrthoDB" id="5847120at2759"/>
<dbReference type="PhylomeDB" id="Q9VDY1"/>
<dbReference type="Reactome" id="R-DME-5689603">
    <property type="pathway name" value="UCH proteinases"/>
</dbReference>
<dbReference type="Reactome" id="R-DME-5696394">
    <property type="pathway name" value="DNA Damage Recognition in GG-NER"/>
</dbReference>
<dbReference type="SignaLink" id="Q9VDY1"/>
<dbReference type="BioGRID-ORCS" id="42314">
    <property type="hits" value="1 hit in 1 CRISPR screen"/>
</dbReference>
<dbReference type="ChiTaRS" id="Ino80">
    <property type="organism name" value="fly"/>
</dbReference>
<dbReference type="GenomeRNAi" id="42314"/>
<dbReference type="PRO" id="PR:Q9VDY1"/>
<dbReference type="Proteomes" id="UP000000803">
    <property type="component" value="Chromosome 3R"/>
</dbReference>
<dbReference type="Bgee" id="FBgn0086613">
    <property type="expression patterns" value="Expressed in posterior terminal follicle cell in ovary and 102 other cell types or tissues"/>
</dbReference>
<dbReference type="ExpressionAtlas" id="Q9VDY1">
    <property type="expression patterns" value="baseline and differential"/>
</dbReference>
<dbReference type="GO" id="GO:0000785">
    <property type="term" value="C:chromatin"/>
    <property type="evidence" value="ECO:0000314"/>
    <property type="project" value="FlyBase"/>
</dbReference>
<dbReference type="GO" id="GO:0031011">
    <property type="term" value="C:Ino80 complex"/>
    <property type="evidence" value="ECO:0000314"/>
    <property type="project" value="FlyBase"/>
</dbReference>
<dbReference type="GO" id="GO:0005634">
    <property type="term" value="C:nucleus"/>
    <property type="evidence" value="ECO:0000314"/>
    <property type="project" value="UniProtKB"/>
</dbReference>
<dbReference type="GO" id="GO:0005700">
    <property type="term" value="C:polytene chromosome"/>
    <property type="evidence" value="ECO:0000314"/>
    <property type="project" value="FlyBase"/>
</dbReference>
<dbReference type="GO" id="GO:0005524">
    <property type="term" value="F:ATP binding"/>
    <property type="evidence" value="ECO:0007669"/>
    <property type="project" value="UniProtKB-KW"/>
</dbReference>
<dbReference type="GO" id="GO:0016887">
    <property type="term" value="F:ATP hydrolysis activity"/>
    <property type="evidence" value="ECO:0000303"/>
    <property type="project" value="FlyBase"/>
</dbReference>
<dbReference type="GO" id="GO:0008094">
    <property type="term" value="F:ATP-dependent activity, acting on DNA"/>
    <property type="evidence" value="ECO:0000250"/>
    <property type="project" value="UniProtKB"/>
</dbReference>
<dbReference type="GO" id="GO:0140658">
    <property type="term" value="F:ATP-dependent chromatin remodeler activity"/>
    <property type="evidence" value="ECO:0007669"/>
    <property type="project" value="InterPro"/>
</dbReference>
<dbReference type="GO" id="GO:0003677">
    <property type="term" value="F:DNA binding"/>
    <property type="evidence" value="ECO:0000250"/>
    <property type="project" value="UniProtKB"/>
</dbReference>
<dbReference type="GO" id="GO:0000976">
    <property type="term" value="F:transcription cis-regulatory region binding"/>
    <property type="evidence" value="ECO:0000314"/>
    <property type="project" value="FlyBase"/>
</dbReference>
<dbReference type="GO" id="GO:0006310">
    <property type="term" value="P:DNA recombination"/>
    <property type="evidence" value="ECO:0007669"/>
    <property type="project" value="UniProtKB-KW"/>
</dbReference>
<dbReference type="GO" id="GO:0006281">
    <property type="term" value="P:DNA repair"/>
    <property type="evidence" value="ECO:0007669"/>
    <property type="project" value="UniProtKB-KW"/>
</dbReference>
<dbReference type="GO" id="GO:0006351">
    <property type="term" value="P:DNA-templated transcription"/>
    <property type="evidence" value="ECO:0007669"/>
    <property type="project" value="InterPro"/>
</dbReference>
<dbReference type="GO" id="GO:0045892">
    <property type="term" value="P:negative regulation of DNA-templated transcription"/>
    <property type="evidence" value="ECO:0000315"/>
    <property type="project" value="FlyBase"/>
</dbReference>
<dbReference type="GO" id="GO:0040034">
    <property type="term" value="P:regulation of development, heterochronic"/>
    <property type="evidence" value="ECO:0000315"/>
    <property type="project" value="FlyBase"/>
</dbReference>
<dbReference type="GO" id="GO:0010468">
    <property type="term" value="P:regulation of gene expression"/>
    <property type="evidence" value="ECO:0000315"/>
    <property type="project" value="FlyBase"/>
</dbReference>
<dbReference type="CDD" id="cd18002">
    <property type="entry name" value="DEXQc_INO80"/>
    <property type="match status" value="1"/>
</dbReference>
<dbReference type="CDD" id="cd18793">
    <property type="entry name" value="SF2_C_SNF"/>
    <property type="match status" value="1"/>
</dbReference>
<dbReference type="FunFam" id="3.40.50.10810:FF:000022">
    <property type="entry name" value="Blast:Putative DNA helicase Ino80"/>
    <property type="match status" value="1"/>
</dbReference>
<dbReference type="FunFam" id="3.40.50.300:FF:001304">
    <property type="entry name" value="DNA helicase INO80"/>
    <property type="match status" value="1"/>
</dbReference>
<dbReference type="FunFam" id="3.40.50.300:FF:001727">
    <property type="entry name" value="SWI/SNF-related matrix-associated actin-dependent regulator of chromatin subfamily A containing DEAD/H box"/>
    <property type="match status" value="1"/>
</dbReference>
<dbReference type="Gene3D" id="3.40.50.300">
    <property type="entry name" value="P-loop containing nucleotide triphosphate hydrolases"/>
    <property type="match status" value="2"/>
</dbReference>
<dbReference type="Gene3D" id="3.40.50.10810">
    <property type="entry name" value="Tandem AAA-ATPase domain"/>
    <property type="match status" value="1"/>
</dbReference>
<dbReference type="InterPro" id="IPR020838">
    <property type="entry name" value="DBINO"/>
</dbReference>
<dbReference type="InterPro" id="IPR031047">
    <property type="entry name" value="DEXQc_INO80"/>
</dbReference>
<dbReference type="InterPro" id="IPR014001">
    <property type="entry name" value="Helicase_ATP-bd"/>
</dbReference>
<dbReference type="InterPro" id="IPR001650">
    <property type="entry name" value="Helicase_C-like"/>
</dbReference>
<dbReference type="InterPro" id="IPR050520">
    <property type="entry name" value="INO80/SWR1_helicase"/>
</dbReference>
<dbReference type="InterPro" id="IPR027417">
    <property type="entry name" value="P-loop_NTPase"/>
</dbReference>
<dbReference type="InterPro" id="IPR038718">
    <property type="entry name" value="SNF2-like_sf"/>
</dbReference>
<dbReference type="InterPro" id="IPR049730">
    <property type="entry name" value="SNF2/RAD54-like_C"/>
</dbReference>
<dbReference type="InterPro" id="IPR000330">
    <property type="entry name" value="SNF2_N"/>
</dbReference>
<dbReference type="PANTHER" id="PTHR45685:SF2">
    <property type="entry name" value="CHROMATIN-REMODELING ATPASE INO80"/>
    <property type="match status" value="1"/>
</dbReference>
<dbReference type="PANTHER" id="PTHR45685">
    <property type="entry name" value="HELICASE SRCAP-RELATED"/>
    <property type="match status" value="1"/>
</dbReference>
<dbReference type="Pfam" id="PF13892">
    <property type="entry name" value="DBINO"/>
    <property type="match status" value="1"/>
</dbReference>
<dbReference type="Pfam" id="PF00271">
    <property type="entry name" value="Helicase_C"/>
    <property type="match status" value="1"/>
</dbReference>
<dbReference type="Pfam" id="PF00176">
    <property type="entry name" value="SNF2-rel_dom"/>
    <property type="match status" value="1"/>
</dbReference>
<dbReference type="SMART" id="SM00487">
    <property type="entry name" value="DEXDc"/>
    <property type="match status" value="1"/>
</dbReference>
<dbReference type="SMART" id="SM00490">
    <property type="entry name" value="HELICc"/>
    <property type="match status" value="1"/>
</dbReference>
<dbReference type="SUPFAM" id="SSF52540">
    <property type="entry name" value="P-loop containing nucleoside triphosphate hydrolases"/>
    <property type="match status" value="2"/>
</dbReference>
<dbReference type="PROSITE" id="PS51413">
    <property type="entry name" value="DBINO"/>
    <property type="match status" value="1"/>
</dbReference>
<dbReference type="PROSITE" id="PS51192">
    <property type="entry name" value="HELICASE_ATP_BIND_1"/>
    <property type="match status" value="1"/>
</dbReference>
<dbReference type="PROSITE" id="PS51194">
    <property type="entry name" value="HELICASE_CTER"/>
    <property type="match status" value="1"/>
</dbReference>
<evidence type="ECO:0000250" key="1">
    <source>
        <dbReference type="UniProtKB" id="Q9ULG1"/>
    </source>
</evidence>
<evidence type="ECO:0000255" key="2"/>
<evidence type="ECO:0000255" key="3">
    <source>
        <dbReference type="PROSITE-ProRule" id="PRU00541"/>
    </source>
</evidence>
<evidence type="ECO:0000255" key="4">
    <source>
        <dbReference type="PROSITE-ProRule" id="PRU00542"/>
    </source>
</evidence>
<evidence type="ECO:0000255" key="5">
    <source>
        <dbReference type="PROSITE-ProRule" id="PRU00746"/>
    </source>
</evidence>
<evidence type="ECO:0000256" key="6">
    <source>
        <dbReference type="SAM" id="MobiDB-lite"/>
    </source>
</evidence>
<evidence type="ECO:0000269" key="7">
    <source>
    </source>
</evidence>
<evidence type="ECO:0000269" key="8">
    <source>
    </source>
</evidence>
<evidence type="ECO:0000269" key="9">
    <source>
    </source>
</evidence>
<evidence type="ECO:0000269" key="10">
    <source>
    </source>
</evidence>
<evidence type="ECO:0000303" key="11">
    <source>
    </source>
</evidence>
<evidence type="ECO:0000305" key="12"/>
<evidence type="ECO:0000312" key="13">
    <source>
        <dbReference type="EMBL" id="AAF55658.2"/>
    </source>
</evidence>
<evidence type="ECO:0000312" key="14">
    <source>
        <dbReference type="EMBL" id="AAL39931.1"/>
    </source>
</evidence>
<evidence type="ECO:0000312" key="15">
    <source>
        <dbReference type="FlyBase" id="FBgn0289122"/>
    </source>
</evidence>
<keyword id="KW-0067">ATP-binding</keyword>
<keyword id="KW-0175">Coiled coil</keyword>
<keyword id="KW-0227">DNA damage</keyword>
<keyword id="KW-0233">DNA recombination</keyword>
<keyword id="KW-0234">DNA repair</keyword>
<keyword id="KW-0238">DNA-binding</keyword>
<keyword id="KW-0378">Hydrolase</keyword>
<keyword id="KW-0547">Nucleotide-binding</keyword>
<keyword id="KW-0539">Nucleus</keyword>
<keyword id="KW-0597">Phosphoprotein</keyword>
<keyword id="KW-1185">Reference proteome</keyword>
<keyword id="KW-0804">Transcription</keyword>
<keyword id="KW-0805">Transcription regulation</keyword>
<comment type="function">
    <text evidence="1">ATPase component of the chromatin remodeling INO80 complex which is involved in transcriptional regulation, DNA replication and DNA repair. Binds DNA. As part of the INO80 complex, remodels chromatin by shifting nucleosomes.</text>
</comment>
<comment type="catalytic activity">
    <reaction evidence="1">
        <text>ATP + H2O = ADP + phosphate + H(+)</text>
        <dbReference type="Rhea" id="RHEA:13065"/>
        <dbReference type="ChEBI" id="CHEBI:15377"/>
        <dbReference type="ChEBI" id="CHEBI:15378"/>
        <dbReference type="ChEBI" id="CHEBI:30616"/>
        <dbReference type="ChEBI" id="CHEBI:43474"/>
        <dbReference type="ChEBI" id="CHEBI:456216"/>
    </reaction>
</comment>
<comment type="subunit">
    <text evidence="9">Component of the chromatin remodeling Ino80 complex.</text>
</comment>
<comment type="interaction">
    <interactant intactId="EBI-3414232">
        <id>Q9VDY1</id>
    </interactant>
    <interactant intactId="EBI-125201">
        <id>Q8ST83</id>
        <label>pho</label>
    </interactant>
    <organismsDiffer>false</organismsDiffer>
    <experiments>4</experiments>
</comment>
<comment type="subcellular location">
    <subcellularLocation>
        <location evidence="5 9">Nucleus</location>
    </subcellularLocation>
</comment>
<comment type="domain">
    <text evidence="1">The DBINO region is involved in binding to DNA.</text>
</comment>
<comment type="similarity">
    <text evidence="2">Belongs to the SNF2/RAD54 helicase family.</text>
</comment>
<gene>
    <name evidence="11 15" type="primary">Ino80</name>
    <name evidence="15" type="ORF">CG31212</name>
</gene>
<feature type="chain" id="PRO_0000306380" description="Chromatin-remodeling ATPase INO80">
    <location>
        <begin position="1"/>
        <end position="1638"/>
    </location>
</feature>
<feature type="domain" description="DBINO" evidence="5">
    <location>
        <begin position="313"/>
        <end position="438"/>
    </location>
</feature>
<feature type="domain" description="Helicase ATP-binding" evidence="3">
    <location>
        <begin position="547"/>
        <end position="718"/>
    </location>
</feature>
<feature type="domain" description="Helicase C-terminal" evidence="4">
    <location>
        <begin position="1160"/>
        <end position="1315"/>
    </location>
</feature>
<feature type="region of interest" description="Disordered" evidence="6">
    <location>
        <begin position="41"/>
        <end position="93"/>
    </location>
</feature>
<feature type="region of interest" description="Disordered" evidence="6">
    <location>
        <begin position="201"/>
        <end position="259"/>
    </location>
</feature>
<feature type="region of interest" description="Disordered" evidence="6">
    <location>
        <begin position="499"/>
        <end position="528"/>
    </location>
</feature>
<feature type="region of interest" description="Disordered" evidence="6">
    <location>
        <begin position="1335"/>
        <end position="1364"/>
    </location>
</feature>
<feature type="region of interest" description="Disordered" evidence="6">
    <location>
        <begin position="1463"/>
        <end position="1638"/>
    </location>
</feature>
<feature type="coiled-coil region" evidence="2">
    <location>
        <begin position="136"/>
        <end position="161"/>
    </location>
</feature>
<feature type="compositionally biased region" description="Basic and acidic residues" evidence="6">
    <location>
        <begin position="55"/>
        <end position="65"/>
    </location>
</feature>
<feature type="compositionally biased region" description="Basic residues" evidence="6">
    <location>
        <begin position="212"/>
        <end position="222"/>
    </location>
</feature>
<feature type="compositionally biased region" description="Acidic residues" evidence="6">
    <location>
        <begin position="250"/>
        <end position="259"/>
    </location>
</feature>
<feature type="compositionally biased region" description="Acidic residues" evidence="6">
    <location>
        <begin position="502"/>
        <end position="511"/>
    </location>
</feature>
<feature type="compositionally biased region" description="Basic and acidic residues" evidence="6">
    <location>
        <begin position="512"/>
        <end position="526"/>
    </location>
</feature>
<feature type="compositionally biased region" description="Polar residues" evidence="6">
    <location>
        <begin position="1338"/>
        <end position="1350"/>
    </location>
</feature>
<feature type="compositionally biased region" description="Basic residues" evidence="6">
    <location>
        <begin position="1473"/>
        <end position="1495"/>
    </location>
</feature>
<feature type="compositionally biased region" description="Low complexity" evidence="6">
    <location>
        <begin position="1505"/>
        <end position="1534"/>
    </location>
</feature>
<feature type="compositionally biased region" description="Low complexity" evidence="6">
    <location>
        <begin position="1618"/>
        <end position="1627"/>
    </location>
</feature>
<feature type="binding site" evidence="3">
    <location>
        <begin position="560"/>
        <end position="567"/>
    </location>
    <ligand>
        <name>ATP</name>
        <dbReference type="ChEBI" id="CHEBI:30616"/>
    </ligand>
</feature>
<feature type="modified residue" description="Phosphoserine" evidence="10">
    <location>
        <position position="47"/>
    </location>
</feature>
<feature type="modified residue" description="Phosphoserine" evidence="10">
    <location>
        <position position="48"/>
    </location>
</feature>
<feature type="modified residue" description="Phosphothreonine" evidence="10">
    <location>
        <position position="52"/>
    </location>
</feature>
<feature type="modified residue" description="Phosphoserine" evidence="10">
    <location>
        <position position="67"/>
    </location>
</feature>
<feature type="modified residue" description="Phosphoserine" evidence="10">
    <location>
        <position position="70"/>
    </location>
</feature>
<feature type="modified residue" description="Phosphoserine" evidence="10">
    <location>
        <position position="227"/>
    </location>
</feature>
<feature type="modified residue" description="Phosphoserine" evidence="10">
    <location>
        <position position="230"/>
    </location>
</feature>
<feature type="sequence conflict" description="In Ref. 3; AAL39931." evidence="12" ref="3">
    <original>LS</original>
    <variation>SA</variation>
    <location>
        <begin position="1628"/>
        <end position="1629"/>
    </location>
</feature>
<proteinExistence type="evidence at protein level"/>
<reference evidence="13" key="1">
    <citation type="journal article" date="2000" name="Science">
        <title>The genome sequence of Drosophila melanogaster.</title>
        <authorList>
            <person name="Adams M.D."/>
            <person name="Celniker S.E."/>
            <person name="Holt R.A."/>
            <person name="Evans C.A."/>
            <person name="Gocayne J.D."/>
            <person name="Amanatides P.G."/>
            <person name="Scherer S.E."/>
            <person name="Li P.W."/>
            <person name="Hoskins R.A."/>
            <person name="Galle R.F."/>
            <person name="George R.A."/>
            <person name="Lewis S.E."/>
            <person name="Richards S."/>
            <person name="Ashburner M."/>
            <person name="Henderson S.N."/>
            <person name="Sutton G.G."/>
            <person name="Wortman J.R."/>
            <person name="Yandell M.D."/>
            <person name="Zhang Q."/>
            <person name="Chen L.X."/>
            <person name="Brandon R.C."/>
            <person name="Rogers Y.-H.C."/>
            <person name="Blazej R.G."/>
            <person name="Champe M."/>
            <person name="Pfeiffer B.D."/>
            <person name="Wan K.H."/>
            <person name="Doyle C."/>
            <person name="Baxter E.G."/>
            <person name="Helt G."/>
            <person name="Nelson C.R."/>
            <person name="Miklos G.L.G."/>
            <person name="Abril J.F."/>
            <person name="Agbayani A."/>
            <person name="An H.-J."/>
            <person name="Andrews-Pfannkoch C."/>
            <person name="Baldwin D."/>
            <person name="Ballew R.M."/>
            <person name="Basu A."/>
            <person name="Baxendale J."/>
            <person name="Bayraktaroglu L."/>
            <person name="Beasley E.M."/>
            <person name="Beeson K.Y."/>
            <person name="Benos P.V."/>
            <person name="Berman B.P."/>
            <person name="Bhandari D."/>
            <person name="Bolshakov S."/>
            <person name="Borkova D."/>
            <person name="Botchan M.R."/>
            <person name="Bouck J."/>
            <person name="Brokstein P."/>
            <person name="Brottier P."/>
            <person name="Burtis K.C."/>
            <person name="Busam D.A."/>
            <person name="Butler H."/>
            <person name="Cadieu E."/>
            <person name="Center A."/>
            <person name="Chandra I."/>
            <person name="Cherry J.M."/>
            <person name="Cawley S."/>
            <person name="Dahlke C."/>
            <person name="Davenport L.B."/>
            <person name="Davies P."/>
            <person name="de Pablos B."/>
            <person name="Delcher A."/>
            <person name="Deng Z."/>
            <person name="Mays A.D."/>
            <person name="Dew I."/>
            <person name="Dietz S.M."/>
            <person name="Dodson K."/>
            <person name="Doup L.E."/>
            <person name="Downes M."/>
            <person name="Dugan-Rocha S."/>
            <person name="Dunkov B.C."/>
            <person name="Dunn P."/>
            <person name="Durbin K.J."/>
            <person name="Evangelista C.C."/>
            <person name="Ferraz C."/>
            <person name="Ferriera S."/>
            <person name="Fleischmann W."/>
            <person name="Fosler C."/>
            <person name="Gabrielian A.E."/>
            <person name="Garg N.S."/>
            <person name="Gelbart W.M."/>
            <person name="Glasser K."/>
            <person name="Glodek A."/>
            <person name="Gong F."/>
            <person name="Gorrell J.H."/>
            <person name="Gu Z."/>
            <person name="Guan P."/>
            <person name="Harris M."/>
            <person name="Harris N.L."/>
            <person name="Harvey D.A."/>
            <person name="Heiman T.J."/>
            <person name="Hernandez J.R."/>
            <person name="Houck J."/>
            <person name="Hostin D."/>
            <person name="Houston K.A."/>
            <person name="Howland T.J."/>
            <person name="Wei M.-H."/>
            <person name="Ibegwam C."/>
            <person name="Jalali M."/>
            <person name="Kalush F."/>
            <person name="Karpen G.H."/>
            <person name="Ke Z."/>
            <person name="Kennison J.A."/>
            <person name="Ketchum K.A."/>
            <person name="Kimmel B.E."/>
            <person name="Kodira C.D."/>
            <person name="Kraft C.L."/>
            <person name="Kravitz S."/>
            <person name="Kulp D."/>
            <person name="Lai Z."/>
            <person name="Lasko P."/>
            <person name="Lei Y."/>
            <person name="Levitsky A.A."/>
            <person name="Li J.H."/>
            <person name="Li Z."/>
            <person name="Liang Y."/>
            <person name="Lin X."/>
            <person name="Liu X."/>
            <person name="Mattei B."/>
            <person name="McIntosh T.C."/>
            <person name="McLeod M.P."/>
            <person name="McPherson D."/>
            <person name="Merkulov G."/>
            <person name="Milshina N.V."/>
            <person name="Mobarry C."/>
            <person name="Morris J."/>
            <person name="Moshrefi A."/>
            <person name="Mount S.M."/>
            <person name="Moy M."/>
            <person name="Murphy B."/>
            <person name="Murphy L."/>
            <person name="Muzny D.M."/>
            <person name="Nelson D.L."/>
            <person name="Nelson D.R."/>
            <person name="Nelson K.A."/>
            <person name="Nixon K."/>
            <person name="Nusskern D.R."/>
            <person name="Pacleb J.M."/>
            <person name="Palazzolo M."/>
            <person name="Pittman G.S."/>
            <person name="Pan S."/>
            <person name="Pollard J."/>
            <person name="Puri V."/>
            <person name="Reese M.G."/>
            <person name="Reinert K."/>
            <person name="Remington K."/>
            <person name="Saunders R.D.C."/>
            <person name="Scheeler F."/>
            <person name="Shen H."/>
            <person name="Shue B.C."/>
            <person name="Siden-Kiamos I."/>
            <person name="Simpson M."/>
            <person name="Skupski M.P."/>
            <person name="Smith T.J."/>
            <person name="Spier E."/>
            <person name="Spradling A.C."/>
            <person name="Stapleton M."/>
            <person name="Strong R."/>
            <person name="Sun E."/>
            <person name="Svirskas R."/>
            <person name="Tector C."/>
            <person name="Turner R."/>
            <person name="Venter E."/>
            <person name="Wang A.H."/>
            <person name="Wang X."/>
            <person name="Wang Z.-Y."/>
            <person name="Wassarman D.A."/>
            <person name="Weinstock G.M."/>
            <person name="Weissenbach J."/>
            <person name="Williams S.M."/>
            <person name="Woodage T."/>
            <person name="Worley K.C."/>
            <person name="Wu D."/>
            <person name="Yang S."/>
            <person name="Yao Q.A."/>
            <person name="Ye J."/>
            <person name="Yeh R.-F."/>
            <person name="Zaveri J.S."/>
            <person name="Zhan M."/>
            <person name="Zhang G."/>
            <person name="Zhao Q."/>
            <person name="Zheng L."/>
            <person name="Zheng X.H."/>
            <person name="Zhong F.N."/>
            <person name="Zhong W."/>
            <person name="Zhou X."/>
            <person name="Zhu S.C."/>
            <person name="Zhu X."/>
            <person name="Smith H.O."/>
            <person name="Gibbs R.A."/>
            <person name="Myers E.W."/>
            <person name="Rubin G.M."/>
            <person name="Venter J.C."/>
        </authorList>
    </citation>
    <scope>NUCLEOTIDE SEQUENCE [LARGE SCALE GENOMIC DNA]</scope>
    <source>
        <strain evidence="7">Berkeley</strain>
    </source>
</reference>
<reference evidence="12 13" key="2">
    <citation type="journal article" date="2002" name="Genome Biol.">
        <title>Annotation of the Drosophila melanogaster euchromatic genome: a systematic review.</title>
        <authorList>
            <person name="Misra S."/>
            <person name="Crosby M.A."/>
            <person name="Mungall C.J."/>
            <person name="Matthews B.B."/>
            <person name="Campbell K.S."/>
            <person name="Hradecky P."/>
            <person name="Huang Y."/>
            <person name="Kaminker J.S."/>
            <person name="Millburn G.H."/>
            <person name="Prochnik S.E."/>
            <person name="Smith C.D."/>
            <person name="Tupy J.L."/>
            <person name="Whitfield E.J."/>
            <person name="Bayraktaroglu L."/>
            <person name="Berman B.P."/>
            <person name="Bettencourt B.R."/>
            <person name="Celniker S.E."/>
            <person name="de Grey A.D.N.J."/>
            <person name="Drysdale R.A."/>
            <person name="Harris N.L."/>
            <person name="Richter J."/>
            <person name="Russo S."/>
            <person name="Schroeder A.J."/>
            <person name="Shu S.Q."/>
            <person name="Stapleton M."/>
            <person name="Yamada C."/>
            <person name="Ashburner M."/>
            <person name="Gelbart W.M."/>
            <person name="Rubin G.M."/>
            <person name="Lewis S.E."/>
        </authorList>
    </citation>
    <scope>GENOME REANNOTATION</scope>
    <source>
        <strain>Berkeley</strain>
    </source>
</reference>
<reference evidence="14" key="3">
    <citation type="journal article" date="2002" name="Genome Biol.">
        <title>A Drosophila full-length cDNA resource.</title>
        <authorList>
            <person name="Stapleton M."/>
            <person name="Carlson J.W."/>
            <person name="Brokstein P."/>
            <person name="Yu C."/>
            <person name="Champe M."/>
            <person name="George R.A."/>
            <person name="Guarin H."/>
            <person name="Kronmiller B."/>
            <person name="Pacleb J.M."/>
            <person name="Park S."/>
            <person name="Wan K.H."/>
            <person name="Rubin G.M."/>
            <person name="Celniker S.E."/>
        </authorList>
    </citation>
    <scope>NUCLEOTIDE SEQUENCE [LARGE SCALE MRNA]</scope>
    <source>
        <strain evidence="8">Berkeley</strain>
        <tissue evidence="8">Embryo</tissue>
    </source>
</reference>
<reference evidence="12" key="4">
    <citation type="journal article" date="2006" name="Genes Dev.">
        <title>A Polycomb group protein complex with sequence-specific DNA-binding and selective methyl-lysine-binding activities.</title>
        <authorList>
            <person name="Klymenko T."/>
            <person name="Papp B."/>
            <person name="Fischle W."/>
            <person name="Koecher T."/>
            <person name="Schelder M."/>
            <person name="Fritsch C."/>
            <person name="Wild B."/>
            <person name="Wilm M."/>
            <person name="Mueller J."/>
        </authorList>
    </citation>
    <scope>IDENTIFICATION IN THE INO80 COMPLEX</scope>
    <scope>SUBCELLULAR LOCATION</scope>
    <source>
        <tissue evidence="9">Embryo</tissue>
    </source>
</reference>
<reference key="5">
    <citation type="journal article" date="2008" name="J. Proteome Res.">
        <title>Phosphoproteome analysis of Drosophila melanogaster embryos.</title>
        <authorList>
            <person name="Zhai B."/>
            <person name="Villen J."/>
            <person name="Beausoleil S.A."/>
            <person name="Mintseris J."/>
            <person name="Gygi S.P."/>
        </authorList>
    </citation>
    <scope>PHOSPHORYLATION [LARGE SCALE ANALYSIS] AT SER-47; SER-48; THR-52; SER-67; SER-70; SER-227 AND SER-230</scope>
    <scope>IDENTIFICATION BY MASS SPECTROMETRY</scope>
    <source>
        <tissue>Embryo</tissue>
    </source>
</reference>